<evidence type="ECO:0000250" key="1">
    <source>
        <dbReference type="UniProtKB" id="P0A959"/>
    </source>
</evidence>
<evidence type="ECO:0000305" key="2"/>
<feature type="chain" id="PRO_0000123869" description="Glutamate-pyruvate aminotransferase AlaA">
    <location>
        <begin position="1"/>
        <end position="404"/>
    </location>
</feature>
<feature type="binding site" evidence="1">
    <location>
        <position position="41"/>
    </location>
    <ligand>
        <name>L-alanine</name>
        <dbReference type="ChEBI" id="CHEBI:57972"/>
    </ligand>
</feature>
<feature type="binding site" evidence="1">
    <location>
        <position position="179"/>
    </location>
    <ligand>
        <name>L-alanine</name>
        <dbReference type="ChEBI" id="CHEBI:57972"/>
    </ligand>
</feature>
<feature type="binding site" evidence="1">
    <location>
        <position position="378"/>
    </location>
    <ligand>
        <name>L-alanine</name>
        <dbReference type="ChEBI" id="CHEBI:57972"/>
    </ligand>
</feature>
<feature type="modified residue" description="N6-(pyridoxal phosphate)lysine" evidence="1">
    <location>
        <position position="240"/>
    </location>
</feature>
<protein>
    <recommendedName>
        <fullName>Glutamate-pyruvate aminotransferase AlaA</fullName>
        <ecNumber evidence="1">2.6.1.2</ecNumber>
    </recommendedName>
</protein>
<comment type="function">
    <text evidence="1">Involved in the biosynthesis of alanine. Catalyzes the transamination of pyruvate by glutamate, leading to the formation of L-alanine and 2-oxoglutarate. Is also able to catalyze the reverse reaction.</text>
</comment>
<comment type="catalytic activity">
    <reaction evidence="1">
        <text>L-alanine + 2-oxoglutarate = pyruvate + L-glutamate</text>
        <dbReference type="Rhea" id="RHEA:19453"/>
        <dbReference type="ChEBI" id="CHEBI:15361"/>
        <dbReference type="ChEBI" id="CHEBI:16810"/>
        <dbReference type="ChEBI" id="CHEBI:29985"/>
        <dbReference type="ChEBI" id="CHEBI:57972"/>
        <dbReference type="EC" id="2.6.1.2"/>
    </reaction>
    <physiologicalReaction direction="right-to-left" evidence="1">
        <dbReference type="Rhea" id="RHEA:19455"/>
    </physiologicalReaction>
</comment>
<comment type="cofactor">
    <cofactor evidence="1">
        <name>pyridoxal 5'-phosphate</name>
        <dbReference type="ChEBI" id="CHEBI:597326"/>
    </cofactor>
</comment>
<comment type="pathway">
    <text evidence="1">Amino-acid biosynthesis; L-alanine biosynthesis.</text>
</comment>
<comment type="subunit">
    <text evidence="1">Homodimer.</text>
</comment>
<comment type="similarity">
    <text evidence="2">Belongs to the class-I pyridoxal-phosphate-dependent aminotransferase family.</text>
</comment>
<proteinExistence type="inferred from homology"/>
<name>ALAA_HAEIN</name>
<dbReference type="EC" id="2.6.1.2" evidence="1"/>
<dbReference type="EMBL" id="L42023">
    <property type="protein sequence ID" value="AAC21948.1"/>
    <property type="molecule type" value="Genomic_DNA"/>
</dbReference>
<dbReference type="RefSeq" id="NP_438453.1">
    <property type="nucleotide sequence ID" value="NC_000907.1"/>
</dbReference>
<dbReference type="SMR" id="P71348"/>
<dbReference type="STRING" id="71421.HI_0286"/>
<dbReference type="EnsemblBacteria" id="AAC21948">
    <property type="protein sequence ID" value="AAC21948"/>
    <property type="gene ID" value="HI_0286"/>
</dbReference>
<dbReference type="KEGG" id="hin:HI_0286"/>
<dbReference type="PATRIC" id="fig|71421.8.peg.302"/>
<dbReference type="eggNOG" id="COG0436">
    <property type="taxonomic scope" value="Bacteria"/>
</dbReference>
<dbReference type="HOGENOM" id="CLU_017584_4_2_6"/>
<dbReference type="OrthoDB" id="9803354at2"/>
<dbReference type="PhylomeDB" id="P71348"/>
<dbReference type="BioCyc" id="HINF71421:G1GJ1-304-MONOMER"/>
<dbReference type="UniPathway" id="UPA00133"/>
<dbReference type="Proteomes" id="UP000000579">
    <property type="component" value="Chromosome"/>
</dbReference>
<dbReference type="GO" id="GO:0004021">
    <property type="term" value="F:L-alanine:2-oxoglutarate aminotransferase activity"/>
    <property type="evidence" value="ECO:0000250"/>
    <property type="project" value="UniProtKB"/>
</dbReference>
<dbReference type="GO" id="GO:0030170">
    <property type="term" value="F:pyridoxal phosphate binding"/>
    <property type="evidence" value="ECO:0007669"/>
    <property type="project" value="InterPro"/>
</dbReference>
<dbReference type="GO" id="GO:0030632">
    <property type="term" value="P:D-alanine biosynthetic process"/>
    <property type="evidence" value="ECO:0000250"/>
    <property type="project" value="UniProtKB"/>
</dbReference>
<dbReference type="CDD" id="cd00609">
    <property type="entry name" value="AAT_like"/>
    <property type="match status" value="1"/>
</dbReference>
<dbReference type="FunFam" id="3.40.640.10:FF:000019">
    <property type="entry name" value="Pyridoxal phosphate-dependent aminotransferase"/>
    <property type="match status" value="1"/>
</dbReference>
<dbReference type="Gene3D" id="3.90.1150.10">
    <property type="entry name" value="Aspartate Aminotransferase, domain 1"/>
    <property type="match status" value="1"/>
</dbReference>
<dbReference type="Gene3D" id="3.40.640.10">
    <property type="entry name" value="Type I PLP-dependent aspartate aminotransferase-like (Major domain)"/>
    <property type="match status" value="1"/>
</dbReference>
<dbReference type="InterPro" id="IPR051926">
    <property type="entry name" value="Ala_Aminotransferase"/>
</dbReference>
<dbReference type="InterPro" id="IPR004839">
    <property type="entry name" value="Aminotransferase_I/II_large"/>
</dbReference>
<dbReference type="InterPro" id="IPR015424">
    <property type="entry name" value="PyrdxlP-dep_Trfase"/>
</dbReference>
<dbReference type="InterPro" id="IPR015421">
    <property type="entry name" value="PyrdxlP-dep_Trfase_major"/>
</dbReference>
<dbReference type="InterPro" id="IPR015422">
    <property type="entry name" value="PyrdxlP-dep_Trfase_small"/>
</dbReference>
<dbReference type="PANTHER" id="PTHR43488">
    <property type="entry name" value="GLUTAMATE-PYRUVATE AMINOTRANSFERASE ALAA"/>
    <property type="match status" value="1"/>
</dbReference>
<dbReference type="PANTHER" id="PTHR43488:SF2">
    <property type="entry name" value="GLUTAMATE-PYRUVATE AMINOTRANSFERASE ALAA"/>
    <property type="match status" value="1"/>
</dbReference>
<dbReference type="Pfam" id="PF00155">
    <property type="entry name" value="Aminotran_1_2"/>
    <property type="match status" value="1"/>
</dbReference>
<dbReference type="SUPFAM" id="SSF53383">
    <property type="entry name" value="PLP-dependent transferases"/>
    <property type="match status" value="1"/>
</dbReference>
<organism>
    <name type="scientific">Haemophilus influenzae (strain ATCC 51907 / DSM 11121 / KW20 / Rd)</name>
    <dbReference type="NCBI Taxonomy" id="71421"/>
    <lineage>
        <taxon>Bacteria</taxon>
        <taxon>Pseudomonadati</taxon>
        <taxon>Pseudomonadota</taxon>
        <taxon>Gammaproteobacteria</taxon>
        <taxon>Pasteurellales</taxon>
        <taxon>Pasteurellaceae</taxon>
        <taxon>Haemophilus</taxon>
    </lineage>
</organism>
<accession>P71348</accession>
<gene>
    <name type="primary">alaA</name>
    <name type="ordered locus">HI_0286</name>
</gene>
<reference key="1">
    <citation type="journal article" date="1995" name="Science">
        <title>Whole-genome random sequencing and assembly of Haemophilus influenzae Rd.</title>
        <authorList>
            <person name="Fleischmann R.D."/>
            <person name="Adams M.D."/>
            <person name="White O."/>
            <person name="Clayton R.A."/>
            <person name="Kirkness E.F."/>
            <person name="Kerlavage A.R."/>
            <person name="Bult C.J."/>
            <person name="Tomb J.-F."/>
            <person name="Dougherty B.A."/>
            <person name="Merrick J.M."/>
            <person name="McKenney K."/>
            <person name="Sutton G.G."/>
            <person name="FitzHugh W."/>
            <person name="Fields C.A."/>
            <person name="Gocayne J.D."/>
            <person name="Scott J.D."/>
            <person name="Shirley R."/>
            <person name="Liu L.-I."/>
            <person name="Glodek A."/>
            <person name="Kelley J.M."/>
            <person name="Weidman J.F."/>
            <person name="Phillips C.A."/>
            <person name="Spriggs T."/>
            <person name="Hedblom E."/>
            <person name="Cotton M.D."/>
            <person name="Utterback T.R."/>
            <person name="Hanna M.C."/>
            <person name="Nguyen D.T."/>
            <person name="Saudek D.M."/>
            <person name="Brandon R.C."/>
            <person name="Fine L.D."/>
            <person name="Fritchman J.L."/>
            <person name="Fuhrmann J.L."/>
            <person name="Geoghagen N.S.M."/>
            <person name="Gnehm C.L."/>
            <person name="McDonald L.A."/>
            <person name="Small K.V."/>
            <person name="Fraser C.M."/>
            <person name="Smith H.O."/>
            <person name="Venter J.C."/>
        </authorList>
    </citation>
    <scope>NUCLEOTIDE SEQUENCE [LARGE SCALE GENOMIC DNA]</scope>
    <source>
        <strain>ATCC 51907 / DSM 11121 / KW20 / Rd</strain>
    </source>
</reference>
<keyword id="KW-0028">Amino-acid biosynthesis</keyword>
<keyword id="KW-0032">Aminotransferase</keyword>
<keyword id="KW-0663">Pyridoxal phosphate</keyword>
<keyword id="KW-1185">Reference proteome</keyword>
<keyword id="KW-0808">Transferase</keyword>
<sequence>MRLFPKSDKLEHVCYDIRGPVHKEALRLEEEGNKILKLNIGNPAPFGFEAPDEILVDVLRNLPSAQGYCDSKGLYSARKAIVQYYQSKGILGATVNDVYIGNGVSELITMAMQALLNDGDEVLVPMPDYPLWTAAVTLSGGKAVHYLCDEDANWFPTIDDIKAKVNAKTKAIVIINPNNPTGAVYSKELLQEIVEIARQNNLIIFADEIYDKILYDGAVHHHIAALAPDLLTVTLNGLSKAYRVAGFRQGWMILNGPKHNAKGYIEGLDMLASMRLCANVPMQHAIQTALGGYQSINEFILPGGRLLEQRNKAYDLITQIPGITCVKPMGAMYMFPKIDVKKFNIHSDEKMVLDLLRQEKVLLVHGKGFNWHSPDHFRIVTLPYVNQLEEAITKLARFLSDYRQ</sequence>